<proteinExistence type="inferred from homology"/>
<feature type="chain" id="PRO_1000007838" description="4-diphosphocytidyl-2-C-methyl-D-erythritol kinase">
    <location>
        <begin position="1"/>
        <end position="312"/>
    </location>
</feature>
<feature type="active site" evidence="1">
    <location>
        <position position="10"/>
    </location>
</feature>
<feature type="active site" evidence="1">
    <location>
        <position position="146"/>
    </location>
</feature>
<feature type="binding site" evidence="1">
    <location>
        <begin position="105"/>
        <end position="115"/>
    </location>
    <ligand>
        <name>ATP</name>
        <dbReference type="ChEBI" id="CHEBI:30616"/>
    </ligand>
</feature>
<comment type="function">
    <text evidence="1">Catalyzes the phosphorylation of the position 2 hydroxy group of 4-diphosphocytidyl-2C-methyl-D-erythritol.</text>
</comment>
<comment type="catalytic activity">
    <reaction evidence="1">
        <text>4-CDP-2-C-methyl-D-erythritol + ATP = 4-CDP-2-C-methyl-D-erythritol 2-phosphate + ADP + H(+)</text>
        <dbReference type="Rhea" id="RHEA:18437"/>
        <dbReference type="ChEBI" id="CHEBI:15378"/>
        <dbReference type="ChEBI" id="CHEBI:30616"/>
        <dbReference type="ChEBI" id="CHEBI:57823"/>
        <dbReference type="ChEBI" id="CHEBI:57919"/>
        <dbReference type="ChEBI" id="CHEBI:456216"/>
        <dbReference type="EC" id="2.7.1.148"/>
    </reaction>
</comment>
<comment type="pathway">
    <text evidence="1">Isoprenoid biosynthesis; isopentenyl diphosphate biosynthesis via DXP pathway; isopentenyl diphosphate from 1-deoxy-D-xylulose 5-phosphate: step 3/6.</text>
</comment>
<comment type="similarity">
    <text evidence="1">Belongs to the GHMP kinase family. IspE subfamily.</text>
</comment>
<keyword id="KW-0067">ATP-binding</keyword>
<keyword id="KW-0414">Isoprene biosynthesis</keyword>
<keyword id="KW-0418">Kinase</keyword>
<keyword id="KW-0547">Nucleotide-binding</keyword>
<keyword id="KW-0808">Transferase</keyword>
<sequence>MKITAKAWAKTNLHLGVGPARDDGFHELMTVFQTIDLFDTVTLTTLDEELVEEGSVVKQLSVTGARGVPEDASNLAWRAVDALVKRRAEKTPLSAVSLHISKGIPVAGGMAGGSADAAATLRAVDAWIGPFGEDTLLEVAAELGSDVPFCLLGGTMRGTGRGEQLVDMLTRGKLHWVVAAMAHGLSTPEVFKKHDELNPESHMDISDLSAALLTGNTAEVGRWLHNDLTSAALSLRPELRSVLQEGIRSGAHAGIVSGSGPTTVFLCESEHKAQDVKEALIDAGQVYAAYTATGPAASTADQRGAHILTVSQ</sequence>
<reference key="1">
    <citation type="journal article" date="2007" name="Microbiology">
        <title>Comparative analysis of the Corynebacterium glutamicum group and complete genome sequence of strain R.</title>
        <authorList>
            <person name="Yukawa H."/>
            <person name="Omumasaba C.A."/>
            <person name="Nonaka H."/>
            <person name="Kos P."/>
            <person name="Okai N."/>
            <person name="Suzuki N."/>
            <person name="Suda M."/>
            <person name="Tsuge Y."/>
            <person name="Watanabe J."/>
            <person name="Ikeda Y."/>
            <person name="Vertes A.A."/>
            <person name="Inui M."/>
        </authorList>
    </citation>
    <scope>NUCLEOTIDE SEQUENCE [LARGE SCALE GENOMIC DNA]</scope>
    <source>
        <strain>R</strain>
    </source>
</reference>
<gene>
    <name evidence="1" type="primary">ispE</name>
    <name type="ordered locus">cgR_1012</name>
</gene>
<dbReference type="EC" id="2.7.1.148" evidence="1"/>
<dbReference type="EMBL" id="AP009044">
    <property type="protein sequence ID" value="BAF53988.1"/>
    <property type="molecule type" value="Genomic_DNA"/>
</dbReference>
<dbReference type="RefSeq" id="WP_011896959.1">
    <property type="nucleotide sequence ID" value="NC_009342.1"/>
</dbReference>
<dbReference type="SMR" id="A4QCP1"/>
<dbReference type="KEGG" id="cgt:cgR_1012"/>
<dbReference type="HOGENOM" id="CLU_053057_1_1_11"/>
<dbReference type="PhylomeDB" id="A4QCP1"/>
<dbReference type="UniPathway" id="UPA00056">
    <property type="reaction ID" value="UER00094"/>
</dbReference>
<dbReference type="Proteomes" id="UP000006698">
    <property type="component" value="Chromosome"/>
</dbReference>
<dbReference type="GO" id="GO:0050515">
    <property type="term" value="F:4-(cytidine 5'-diphospho)-2-C-methyl-D-erythritol kinase activity"/>
    <property type="evidence" value="ECO:0007669"/>
    <property type="project" value="UniProtKB-UniRule"/>
</dbReference>
<dbReference type="GO" id="GO:0005524">
    <property type="term" value="F:ATP binding"/>
    <property type="evidence" value="ECO:0007669"/>
    <property type="project" value="UniProtKB-UniRule"/>
</dbReference>
<dbReference type="GO" id="GO:0019288">
    <property type="term" value="P:isopentenyl diphosphate biosynthetic process, methylerythritol 4-phosphate pathway"/>
    <property type="evidence" value="ECO:0007669"/>
    <property type="project" value="UniProtKB-UniRule"/>
</dbReference>
<dbReference type="GO" id="GO:0016114">
    <property type="term" value="P:terpenoid biosynthetic process"/>
    <property type="evidence" value="ECO:0007669"/>
    <property type="project" value="InterPro"/>
</dbReference>
<dbReference type="Gene3D" id="3.30.230.10">
    <property type="match status" value="1"/>
</dbReference>
<dbReference type="Gene3D" id="3.30.70.890">
    <property type="entry name" value="GHMP kinase, C-terminal domain"/>
    <property type="match status" value="1"/>
</dbReference>
<dbReference type="HAMAP" id="MF_00061">
    <property type="entry name" value="IspE"/>
    <property type="match status" value="1"/>
</dbReference>
<dbReference type="InterPro" id="IPR013750">
    <property type="entry name" value="GHMP_kinase_C_dom"/>
</dbReference>
<dbReference type="InterPro" id="IPR036554">
    <property type="entry name" value="GHMP_kinase_C_sf"/>
</dbReference>
<dbReference type="InterPro" id="IPR006204">
    <property type="entry name" value="GHMP_kinase_N_dom"/>
</dbReference>
<dbReference type="InterPro" id="IPR004424">
    <property type="entry name" value="IspE"/>
</dbReference>
<dbReference type="InterPro" id="IPR020568">
    <property type="entry name" value="Ribosomal_Su5_D2-typ_SF"/>
</dbReference>
<dbReference type="InterPro" id="IPR014721">
    <property type="entry name" value="Ribsml_uS5_D2-typ_fold_subgr"/>
</dbReference>
<dbReference type="NCBIfam" id="TIGR00154">
    <property type="entry name" value="ispE"/>
    <property type="match status" value="1"/>
</dbReference>
<dbReference type="NCBIfam" id="NF002870">
    <property type="entry name" value="PRK03188.1"/>
    <property type="match status" value="1"/>
</dbReference>
<dbReference type="PANTHER" id="PTHR43527">
    <property type="entry name" value="4-DIPHOSPHOCYTIDYL-2-C-METHYL-D-ERYTHRITOL KINASE, CHLOROPLASTIC"/>
    <property type="match status" value="1"/>
</dbReference>
<dbReference type="PANTHER" id="PTHR43527:SF2">
    <property type="entry name" value="4-DIPHOSPHOCYTIDYL-2-C-METHYL-D-ERYTHRITOL KINASE, CHLOROPLASTIC"/>
    <property type="match status" value="1"/>
</dbReference>
<dbReference type="Pfam" id="PF08544">
    <property type="entry name" value="GHMP_kinases_C"/>
    <property type="match status" value="1"/>
</dbReference>
<dbReference type="Pfam" id="PF00288">
    <property type="entry name" value="GHMP_kinases_N"/>
    <property type="match status" value="1"/>
</dbReference>
<dbReference type="PIRSF" id="PIRSF010376">
    <property type="entry name" value="IspE"/>
    <property type="match status" value="1"/>
</dbReference>
<dbReference type="SUPFAM" id="SSF55060">
    <property type="entry name" value="GHMP Kinase, C-terminal domain"/>
    <property type="match status" value="1"/>
</dbReference>
<dbReference type="SUPFAM" id="SSF54211">
    <property type="entry name" value="Ribosomal protein S5 domain 2-like"/>
    <property type="match status" value="1"/>
</dbReference>
<name>ISPE_CORGB</name>
<protein>
    <recommendedName>
        <fullName evidence="1">4-diphosphocytidyl-2-C-methyl-D-erythritol kinase</fullName>
        <shortName evidence="1">CMK</shortName>
        <ecNumber evidence="1">2.7.1.148</ecNumber>
    </recommendedName>
    <alternativeName>
        <fullName evidence="1">4-(cytidine-5'-diphospho)-2-C-methyl-D-erythritol kinase</fullName>
    </alternativeName>
</protein>
<organism>
    <name type="scientific">Corynebacterium glutamicum (strain R)</name>
    <dbReference type="NCBI Taxonomy" id="340322"/>
    <lineage>
        <taxon>Bacteria</taxon>
        <taxon>Bacillati</taxon>
        <taxon>Actinomycetota</taxon>
        <taxon>Actinomycetes</taxon>
        <taxon>Mycobacteriales</taxon>
        <taxon>Corynebacteriaceae</taxon>
        <taxon>Corynebacterium</taxon>
    </lineage>
</organism>
<accession>A4QCP1</accession>
<evidence type="ECO:0000255" key="1">
    <source>
        <dbReference type="HAMAP-Rule" id="MF_00061"/>
    </source>
</evidence>